<evidence type="ECO:0000255" key="1">
    <source>
        <dbReference type="HAMAP-Rule" id="MF_02055"/>
    </source>
</evidence>
<evidence type="ECO:0000255" key="2">
    <source>
        <dbReference type="PROSITE-ProRule" id="PRU01246"/>
    </source>
</evidence>
<evidence type="ECO:0000255" key="3">
    <source>
        <dbReference type="PROSITE-ProRule" id="PRU01248"/>
    </source>
</evidence>
<feature type="chain" id="PRO_0000095358" description="Tyrosine recombinase XerA">
    <location>
        <begin position="1"/>
        <end position="282"/>
    </location>
</feature>
<feature type="domain" description="Core-binding (CB)" evidence="3">
    <location>
        <begin position="2"/>
        <end position="79"/>
    </location>
</feature>
<feature type="domain" description="Tyr recombinase" evidence="2">
    <location>
        <begin position="95"/>
        <end position="271"/>
    </location>
</feature>
<feature type="active site" evidence="1">
    <location>
        <position position="132"/>
    </location>
</feature>
<feature type="active site" evidence="1">
    <location>
        <position position="157"/>
    </location>
</feature>
<feature type="active site" evidence="1">
    <location>
        <position position="223"/>
    </location>
</feature>
<feature type="active site" evidence="1">
    <location>
        <position position="226"/>
    </location>
</feature>
<feature type="active site" evidence="1">
    <location>
        <position position="249"/>
    </location>
</feature>
<feature type="active site" description="O-(3'-phospho-DNA)-tyrosine intermediate" evidence="1">
    <location>
        <position position="258"/>
    </location>
</feature>
<dbReference type="EMBL" id="AP006878">
    <property type="protein sequence ID" value="BAD84966.1"/>
    <property type="molecule type" value="Genomic_DNA"/>
</dbReference>
<dbReference type="RefSeq" id="WP_011249728.1">
    <property type="nucleotide sequence ID" value="NC_006624.1"/>
</dbReference>
<dbReference type="SMR" id="Q5JHA3"/>
<dbReference type="FunCoup" id="Q5JHA3">
    <property type="interactions" value="4"/>
</dbReference>
<dbReference type="STRING" id="69014.TK0777"/>
<dbReference type="EnsemblBacteria" id="BAD84966">
    <property type="protein sequence ID" value="BAD84966"/>
    <property type="gene ID" value="TK0777"/>
</dbReference>
<dbReference type="GeneID" id="78447292"/>
<dbReference type="KEGG" id="tko:TK0777"/>
<dbReference type="PATRIC" id="fig|69014.16.peg.757"/>
<dbReference type="eggNOG" id="arCOG01241">
    <property type="taxonomic scope" value="Archaea"/>
</dbReference>
<dbReference type="HOGENOM" id="CLU_027562_9_5_2"/>
<dbReference type="InParanoid" id="Q5JHA3"/>
<dbReference type="OrthoDB" id="142231at2157"/>
<dbReference type="PhylomeDB" id="Q5JHA3"/>
<dbReference type="Proteomes" id="UP000000536">
    <property type="component" value="Chromosome"/>
</dbReference>
<dbReference type="GO" id="GO:0005737">
    <property type="term" value="C:cytoplasm"/>
    <property type="evidence" value="ECO:0007669"/>
    <property type="project" value="UniProtKB-SubCell"/>
</dbReference>
<dbReference type="GO" id="GO:0003677">
    <property type="term" value="F:DNA binding"/>
    <property type="evidence" value="ECO:0007669"/>
    <property type="project" value="UniProtKB-KW"/>
</dbReference>
<dbReference type="GO" id="GO:0009009">
    <property type="term" value="F:site-specific recombinase activity"/>
    <property type="evidence" value="ECO:0000318"/>
    <property type="project" value="GO_Central"/>
</dbReference>
<dbReference type="GO" id="GO:0009037">
    <property type="term" value="F:tyrosine-based site-specific recombinase activity"/>
    <property type="evidence" value="ECO:0007669"/>
    <property type="project" value="UniProtKB-UniRule"/>
</dbReference>
<dbReference type="GO" id="GO:0007059">
    <property type="term" value="P:chromosome segregation"/>
    <property type="evidence" value="ECO:0000318"/>
    <property type="project" value="GO_Central"/>
</dbReference>
<dbReference type="GO" id="GO:0006310">
    <property type="term" value="P:DNA recombination"/>
    <property type="evidence" value="ECO:0000318"/>
    <property type="project" value="GO_Central"/>
</dbReference>
<dbReference type="GO" id="GO:0006313">
    <property type="term" value="P:DNA transposition"/>
    <property type="evidence" value="ECO:0007669"/>
    <property type="project" value="UniProtKB-UniRule"/>
</dbReference>
<dbReference type="CDD" id="cd00798">
    <property type="entry name" value="INT_XerDC_C"/>
    <property type="match status" value="1"/>
</dbReference>
<dbReference type="Gene3D" id="1.10.150.130">
    <property type="match status" value="1"/>
</dbReference>
<dbReference type="Gene3D" id="1.10.443.10">
    <property type="entry name" value="Intergrase catalytic core"/>
    <property type="match status" value="1"/>
</dbReference>
<dbReference type="HAMAP" id="MF_02055">
    <property type="entry name" value="Recomb_XerA"/>
    <property type="match status" value="1"/>
</dbReference>
<dbReference type="InterPro" id="IPR044068">
    <property type="entry name" value="CB"/>
</dbReference>
<dbReference type="InterPro" id="IPR011010">
    <property type="entry name" value="DNA_brk_join_enz"/>
</dbReference>
<dbReference type="InterPro" id="IPR013762">
    <property type="entry name" value="Integrase-like_cat_sf"/>
</dbReference>
<dbReference type="InterPro" id="IPR002104">
    <property type="entry name" value="Integrase_catalytic"/>
</dbReference>
<dbReference type="InterPro" id="IPR010998">
    <property type="entry name" value="Integrase_recombinase_N"/>
</dbReference>
<dbReference type="InterPro" id="IPR004107">
    <property type="entry name" value="Integrase_SAM-like_N"/>
</dbReference>
<dbReference type="InterPro" id="IPR050090">
    <property type="entry name" value="Tyrosine_recombinase_XerCD"/>
</dbReference>
<dbReference type="InterPro" id="IPR033686">
    <property type="entry name" value="XerA"/>
</dbReference>
<dbReference type="NCBIfam" id="NF040815">
    <property type="entry name" value="recomb_XerA_Arch"/>
    <property type="match status" value="1"/>
</dbReference>
<dbReference type="PANTHER" id="PTHR30349:SF41">
    <property type="entry name" value="INTEGRASE_RECOMBINASE PROTEIN MJ0367-RELATED"/>
    <property type="match status" value="1"/>
</dbReference>
<dbReference type="PANTHER" id="PTHR30349">
    <property type="entry name" value="PHAGE INTEGRASE-RELATED"/>
    <property type="match status" value="1"/>
</dbReference>
<dbReference type="Pfam" id="PF02899">
    <property type="entry name" value="Phage_int_SAM_1"/>
    <property type="match status" value="1"/>
</dbReference>
<dbReference type="Pfam" id="PF00589">
    <property type="entry name" value="Phage_integrase"/>
    <property type="match status" value="1"/>
</dbReference>
<dbReference type="SUPFAM" id="SSF56349">
    <property type="entry name" value="DNA breaking-rejoining enzymes"/>
    <property type="match status" value="1"/>
</dbReference>
<dbReference type="PROSITE" id="PS51900">
    <property type="entry name" value="CB"/>
    <property type="match status" value="1"/>
</dbReference>
<dbReference type="PROSITE" id="PS51898">
    <property type="entry name" value="TYR_RECOMBINASE"/>
    <property type="match status" value="1"/>
</dbReference>
<sequence>MSEPNEVIEEFETYLDLEGKSPHTIRMYTYYVRRYLEWGGDLNAHSALRFLAHLRKNGYSNRSLNLVVQALRAYFRFEGLDDEAERLKPPKVPRSLPKALTREEVKRLLSVIPPTRKRDRLIVLLLYGAGLRVSELCNLKKDDVDLDRGLIVVRGGKGAKDRVVPIPKYLADEIRAYLESRSDESEYLLVEDRRRRKDKLSTRNVWYLLKRYGQKAGVEVTPHKLRHSFATHLLEEGVDIRAIQELLGHSNLSTTQIYTKVTVEHLRKAQEKAKLIEKLMGE</sequence>
<gene>
    <name evidence="1" type="primary">xerA</name>
    <name type="ordered locus">TK0777</name>
</gene>
<keyword id="KW-0963">Cytoplasm</keyword>
<keyword id="KW-0229">DNA integration</keyword>
<keyword id="KW-0233">DNA recombination</keyword>
<keyword id="KW-0238">DNA-binding</keyword>
<keyword id="KW-1185">Reference proteome</keyword>
<accession>Q5JHA3</accession>
<proteinExistence type="inferred from homology"/>
<reference key="1">
    <citation type="journal article" date="2005" name="Genome Res.">
        <title>Complete genome sequence of the hyperthermophilic archaeon Thermococcus kodakaraensis KOD1 and comparison with Pyrococcus genomes.</title>
        <authorList>
            <person name="Fukui T."/>
            <person name="Atomi H."/>
            <person name="Kanai T."/>
            <person name="Matsumi R."/>
            <person name="Fujiwara S."/>
            <person name="Imanaka T."/>
        </authorList>
    </citation>
    <scope>NUCLEOTIDE SEQUENCE [LARGE SCALE GENOMIC DNA]</scope>
    <source>
        <strain>ATCC BAA-918 / JCM 12380 / KOD1</strain>
    </source>
</reference>
<name>XERA_THEKO</name>
<protein>
    <recommendedName>
        <fullName evidence="1">Tyrosine recombinase XerA</fullName>
    </recommendedName>
</protein>
<comment type="function">
    <text evidence="1">Site-specific tyrosine recombinase, which acts by catalyzing the cutting and rejoining of the recombining DNA molecules.</text>
</comment>
<comment type="subcellular location">
    <subcellularLocation>
        <location evidence="1">Cytoplasm</location>
    </subcellularLocation>
</comment>
<comment type="similarity">
    <text evidence="1">Belongs to the 'phage' integrase family. XerA subfamily.</text>
</comment>
<organism>
    <name type="scientific">Thermococcus kodakarensis (strain ATCC BAA-918 / JCM 12380 / KOD1)</name>
    <name type="common">Pyrococcus kodakaraensis (strain KOD1)</name>
    <dbReference type="NCBI Taxonomy" id="69014"/>
    <lineage>
        <taxon>Archaea</taxon>
        <taxon>Methanobacteriati</taxon>
        <taxon>Methanobacteriota</taxon>
        <taxon>Thermococci</taxon>
        <taxon>Thermococcales</taxon>
        <taxon>Thermococcaceae</taxon>
        <taxon>Thermococcus</taxon>
    </lineage>
</organism>